<protein>
    <recommendedName>
        <fullName>ATP-dependent DNA helicase RecG</fullName>
        <ecNumber evidence="1">5.6.2.4</ecNumber>
    </recommendedName>
    <alternativeName>
        <fullName>DNA branch migration protein RecG</fullName>
    </alternativeName>
    <alternativeName>
        <fullName>Probable DNA 3'-5' helicase RecG</fullName>
    </alternativeName>
</protein>
<sequence length="743" mass="81505">MVSLSDRLDYIVGAKAADSLDEVFGIRTVDDLLRHYPRSYTKGATVRGAQDERPEAGEHITIVDVITEAVTLPMKKDSKKKYLRLTVGSGRNKVIATFFNAGYISKGLTKDTRVMLSGEVGFFRGVMQLTHPAFLILDSPDGRNRGSSSLRRIADASQAVSGEVLMSAFERRFFPIYPASTKLQSWDIYACVRQVLEVLDPVADPLPADLRAKHGLVSEDEALRAIHLAESESDRRRARERLTFDEAVGLQWALVTRRHGELSESGPSAPPRSDGLMAELMRRLPFELTEGQREVRDVLSDGLAATRPLNRLLQGEVGSGKTIVAVLAMLQMIDAGYQCVLLAPTEVLAAQHLLSIRDVLGPLGMGCQLGGAENATQVALLTGSMTMAQKKKVRADIFSGQTGIVIGTHALLQDAIEFHNLGMVVVDEQHRFGVEQRDQLRTKARTGIMPHLLVMTATPIPRTVALTVYGDLEMSTLRELPRGRQPITSNVIFVKDKPGWLDRAWQRILEEVAAGRQAYVVAPRIDETEDPQKGGQNSRPSETADGLYARLRSGELANVRLALMHGRLSADEKDAAMMAFRAGEIDVLVCTNVIEVGVDVPNATIMLVMDADRFGISQLHQLRGRIGRGTHPSLCLLASWVSPGSPAGRRLCAVAETMDGFALADLDLKERREGDVLGRNQSGKAITLRMLSLAEHQVFIEAARDFCTRAYEYPHLGLAPHPGLADLAARFIDTDRIEYLGKS</sequence>
<feature type="chain" id="PRO_0000102145" description="ATP-dependent DNA helicase RecG">
    <location>
        <begin position="1"/>
        <end position="743"/>
    </location>
</feature>
<feature type="domain" description="Helicase ATP-binding" evidence="3">
    <location>
        <begin position="302"/>
        <end position="477"/>
    </location>
</feature>
<feature type="domain" description="Helicase C-terminal" evidence="4">
    <location>
        <begin position="520"/>
        <end position="694"/>
    </location>
</feature>
<feature type="region of interest" description="Wedge domain" evidence="2">
    <location>
        <begin position="44"/>
        <end position="171"/>
    </location>
</feature>
<feature type="region of interest" description="Disordered" evidence="5">
    <location>
        <begin position="524"/>
        <end position="545"/>
    </location>
</feature>
<feature type="short sequence motif" description="DEAH box" evidence="3">
    <location>
        <begin position="427"/>
        <end position="430"/>
    </location>
</feature>
<feature type="binding site" evidence="3">
    <location>
        <begin position="315"/>
        <end position="322"/>
    </location>
    <ligand>
        <name>ATP</name>
        <dbReference type="ChEBI" id="CHEBI:30616"/>
    </ligand>
</feature>
<accession>O69460</accession>
<proteinExistence type="inferred from homology"/>
<comment type="function">
    <text evidence="1">Plays a critical role in recombination and DNA repair. Helps process Holliday junction intermediates to mature products by catalyzing branch migration. Has replication fork regression activity, unwinds stalled or blocked replication forks to make a HJ that can be resolved. Has a DNA unwinding activity characteristic of a DNA helicase with 3'-5' polarity (By similarity).</text>
</comment>
<comment type="catalytic activity">
    <reaction evidence="1">
        <text>Couples ATP hydrolysis with the unwinding of duplex DNA by translocating in the 3'-5' direction.</text>
        <dbReference type="EC" id="5.6.2.4"/>
    </reaction>
</comment>
<comment type="catalytic activity">
    <reaction evidence="1">
        <text>ATP + H2O = ADP + phosphate + H(+)</text>
        <dbReference type="Rhea" id="RHEA:13065"/>
        <dbReference type="ChEBI" id="CHEBI:15377"/>
        <dbReference type="ChEBI" id="CHEBI:15378"/>
        <dbReference type="ChEBI" id="CHEBI:30616"/>
        <dbReference type="ChEBI" id="CHEBI:43474"/>
        <dbReference type="ChEBI" id="CHEBI:456216"/>
        <dbReference type="EC" id="5.6.2.4"/>
    </reaction>
</comment>
<comment type="subunit">
    <text evidence="2">Monomer (By similarity).</text>
</comment>
<comment type="domain">
    <text evidence="2">The wedge domain within the N-terminus inserts into the replication fork junction, where the lagging and leading strand split (By similarity).</text>
</comment>
<comment type="similarity">
    <text evidence="6">Belongs to the helicase family. RecG subfamily.</text>
</comment>
<organism>
    <name type="scientific">Mycobacterium leprae (strain TN)</name>
    <dbReference type="NCBI Taxonomy" id="272631"/>
    <lineage>
        <taxon>Bacteria</taxon>
        <taxon>Bacillati</taxon>
        <taxon>Actinomycetota</taxon>
        <taxon>Actinomycetes</taxon>
        <taxon>Mycobacteriales</taxon>
        <taxon>Mycobacteriaceae</taxon>
        <taxon>Mycobacterium</taxon>
    </lineage>
</organism>
<evidence type="ECO:0000250" key="1">
    <source>
        <dbReference type="UniProtKB" id="P24230"/>
    </source>
</evidence>
<evidence type="ECO:0000250" key="2">
    <source>
        <dbReference type="UniProtKB" id="Q9WY48"/>
    </source>
</evidence>
<evidence type="ECO:0000255" key="3">
    <source>
        <dbReference type="PROSITE-ProRule" id="PRU00541"/>
    </source>
</evidence>
<evidence type="ECO:0000255" key="4">
    <source>
        <dbReference type="PROSITE-ProRule" id="PRU00542"/>
    </source>
</evidence>
<evidence type="ECO:0000256" key="5">
    <source>
        <dbReference type="SAM" id="MobiDB-lite"/>
    </source>
</evidence>
<evidence type="ECO:0000305" key="6"/>
<gene>
    <name type="primary">recG</name>
    <name type="ordered locus">ML1671</name>
    <name type="ORF">MLCB1243.01</name>
</gene>
<reference key="1">
    <citation type="journal article" date="2001" name="Nature">
        <title>Massive gene decay in the leprosy bacillus.</title>
        <authorList>
            <person name="Cole S.T."/>
            <person name="Eiglmeier K."/>
            <person name="Parkhill J."/>
            <person name="James K.D."/>
            <person name="Thomson N.R."/>
            <person name="Wheeler P.R."/>
            <person name="Honore N."/>
            <person name="Garnier T."/>
            <person name="Churcher C.M."/>
            <person name="Harris D.E."/>
            <person name="Mungall K.L."/>
            <person name="Basham D."/>
            <person name="Brown D."/>
            <person name="Chillingworth T."/>
            <person name="Connor R."/>
            <person name="Davies R.M."/>
            <person name="Devlin K."/>
            <person name="Duthoy S."/>
            <person name="Feltwell T."/>
            <person name="Fraser A."/>
            <person name="Hamlin N."/>
            <person name="Holroyd S."/>
            <person name="Hornsby T."/>
            <person name="Jagels K."/>
            <person name="Lacroix C."/>
            <person name="Maclean J."/>
            <person name="Moule S."/>
            <person name="Murphy L.D."/>
            <person name="Oliver K."/>
            <person name="Quail M.A."/>
            <person name="Rajandream M.A."/>
            <person name="Rutherford K.M."/>
            <person name="Rutter S."/>
            <person name="Seeger K."/>
            <person name="Simon S."/>
            <person name="Simmonds M."/>
            <person name="Skelton J."/>
            <person name="Squares R."/>
            <person name="Squares S."/>
            <person name="Stevens K."/>
            <person name="Taylor K."/>
            <person name="Whitehead S."/>
            <person name="Woodward J.R."/>
            <person name="Barrell B.G."/>
        </authorList>
    </citation>
    <scope>NUCLEOTIDE SEQUENCE [LARGE SCALE GENOMIC DNA]</scope>
    <source>
        <strain>TN</strain>
    </source>
</reference>
<keyword id="KW-0067">ATP-binding</keyword>
<keyword id="KW-0227">DNA damage</keyword>
<keyword id="KW-0233">DNA recombination</keyword>
<keyword id="KW-0234">DNA repair</keyword>
<keyword id="KW-0238">DNA-binding</keyword>
<keyword id="KW-0347">Helicase</keyword>
<keyword id="KW-0378">Hydrolase</keyword>
<keyword id="KW-0413">Isomerase</keyword>
<keyword id="KW-0547">Nucleotide-binding</keyword>
<keyword id="KW-1185">Reference proteome</keyword>
<name>RECG_MYCLE</name>
<dbReference type="EC" id="5.6.2.4" evidence="1"/>
<dbReference type="EMBL" id="AL583923">
    <property type="protein sequence ID" value="CAC30624.1"/>
    <property type="molecule type" value="Genomic_DNA"/>
</dbReference>
<dbReference type="EMBL" id="AL023635">
    <property type="protein sequence ID" value="CAA19182.1"/>
    <property type="molecule type" value="Genomic_DNA"/>
</dbReference>
<dbReference type="PIR" id="A87118">
    <property type="entry name" value="A87118"/>
</dbReference>
<dbReference type="PIR" id="T44697">
    <property type="entry name" value="T44697"/>
</dbReference>
<dbReference type="RefSeq" id="NP_302148.1">
    <property type="nucleotide sequence ID" value="NC_002677.1"/>
</dbReference>
<dbReference type="RefSeq" id="WP_010908469.1">
    <property type="nucleotide sequence ID" value="NC_002677.1"/>
</dbReference>
<dbReference type="SMR" id="O69460"/>
<dbReference type="STRING" id="272631.gene:17575514"/>
<dbReference type="KEGG" id="mle:ML1671"/>
<dbReference type="PATRIC" id="fig|272631.5.peg.3159"/>
<dbReference type="Leproma" id="ML1671"/>
<dbReference type="eggNOG" id="COG1200">
    <property type="taxonomic scope" value="Bacteria"/>
</dbReference>
<dbReference type="HOGENOM" id="CLU_005122_7_1_11"/>
<dbReference type="OrthoDB" id="9804325at2"/>
<dbReference type="Proteomes" id="UP000000806">
    <property type="component" value="Chromosome"/>
</dbReference>
<dbReference type="GO" id="GO:0005524">
    <property type="term" value="F:ATP binding"/>
    <property type="evidence" value="ECO:0007669"/>
    <property type="project" value="UniProtKB-KW"/>
</dbReference>
<dbReference type="GO" id="GO:0016887">
    <property type="term" value="F:ATP hydrolysis activity"/>
    <property type="evidence" value="ECO:0007669"/>
    <property type="project" value="RHEA"/>
</dbReference>
<dbReference type="GO" id="GO:0003677">
    <property type="term" value="F:DNA binding"/>
    <property type="evidence" value="ECO:0007669"/>
    <property type="project" value="UniProtKB-KW"/>
</dbReference>
<dbReference type="GO" id="GO:0003678">
    <property type="term" value="F:DNA helicase activity"/>
    <property type="evidence" value="ECO:0007669"/>
    <property type="project" value="InterPro"/>
</dbReference>
<dbReference type="GO" id="GO:0006310">
    <property type="term" value="P:DNA recombination"/>
    <property type="evidence" value="ECO:0007669"/>
    <property type="project" value="UniProtKB-KW"/>
</dbReference>
<dbReference type="GO" id="GO:0006281">
    <property type="term" value="P:DNA repair"/>
    <property type="evidence" value="ECO:0007669"/>
    <property type="project" value="UniProtKB-KW"/>
</dbReference>
<dbReference type="CDD" id="cd17992">
    <property type="entry name" value="DEXHc_RecG"/>
    <property type="match status" value="1"/>
</dbReference>
<dbReference type="CDD" id="cd04488">
    <property type="entry name" value="RecG_wedge_OBF"/>
    <property type="match status" value="1"/>
</dbReference>
<dbReference type="Gene3D" id="2.40.50.140">
    <property type="entry name" value="Nucleic acid-binding proteins"/>
    <property type="match status" value="1"/>
</dbReference>
<dbReference type="Gene3D" id="3.40.50.300">
    <property type="entry name" value="P-loop containing nucleotide triphosphate hydrolases"/>
    <property type="match status" value="2"/>
</dbReference>
<dbReference type="InterPro" id="IPR004609">
    <property type="entry name" value="ATP-dep_DNA_helicase_RecG"/>
</dbReference>
<dbReference type="InterPro" id="IPR011545">
    <property type="entry name" value="DEAD/DEAH_box_helicase_dom"/>
</dbReference>
<dbReference type="InterPro" id="IPR014001">
    <property type="entry name" value="Helicase_ATP-bd"/>
</dbReference>
<dbReference type="InterPro" id="IPR001650">
    <property type="entry name" value="Helicase_C-like"/>
</dbReference>
<dbReference type="InterPro" id="IPR012340">
    <property type="entry name" value="NA-bd_OB-fold"/>
</dbReference>
<dbReference type="InterPro" id="IPR027417">
    <property type="entry name" value="P-loop_NTPase"/>
</dbReference>
<dbReference type="InterPro" id="IPR047112">
    <property type="entry name" value="RecG/Mfd"/>
</dbReference>
<dbReference type="InterPro" id="IPR033454">
    <property type="entry name" value="RecG_wedge"/>
</dbReference>
<dbReference type="NCBIfam" id="NF008167">
    <property type="entry name" value="PRK10917.2-1"/>
    <property type="match status" value="1"/>
</dbReference>
<dbReference type="NCBIfam" id="TIGR00643">
    <property type="entry name" value="recG"/>
    <property type="match status" value="1"/>
</dbReference>
<dbReference type="PANTHER" id="PTHR47964">
    <property type="entry name" value="ATP-DEPENDENT DNA HELICASE HOMOLOG RECG, CHLOROPLASTIC"/>
    <property type="match status" value="1"/>
</dbReference>
<dbReference type="PANTHER" id="PTHR47964:SF1">
    <property type="entry name" value="ATP-DEPENDENT DNA HELICASE HOMOLOG RECG, CHLOROPLASTIC"/>
    <property type="match status" value="1"/>
</dbReference>
<dbReference type="Pfam" id="PF00270">
    <property type="entry name" value="DEAD"/>
    <property type="match status" value="1"/>
</dbReference>
<dbReference type="Pfam" id="PF00271">
    <property type="entry name" value="Helicase_C"/>
    <property type="match status" value="1"/>
</dbReference>
<dbReference type="Pfam" id="PF17191">
    <property type="entry name" value="RecG_wedge"/>
    <property type="match status" value="1"/>
</dbReference>
<dbReference type="SMART" id="SM00487">
    <property type="entry name" value="DEXDc"/>
    <property type="match status" value="1"/>
</dbReference>
<dbReference type="SMART" id="SM00490">
    <property type="entry name" value="HELICc"/>
    <property type="match status" value="1"/>
</dbReference>
<dbReference type="SUPFAM" id="SSF50249">
    <property type="entry name" value="Nucleic acid-binding proteins"/>
    <property type="match status" value="1"/>
</dbReference>
<dbReference type="SUPFAM" id="SSF52540">
    <property type="entry name" value="P-loop containing nucleoside triphosphate hydrolases"/>
    <property type="match status" value="2"/>
</dbReference>
<dbReference type="PROSITE" id="PS51192">
    <property type="entry name" value="HELICASE_ATP_BIND_1"/>
    <property type="match status" value="1"/>
</dbReference>
<dbReference type="PROSITE" id="PS51194">
    <property type="entry name" value="HELICASE_CTER"/>
    <property type="match status" value="1"/>
</dbReference>